<gene>
    <name evidence="1" type="primary">yfbU</name>
    <name type="ordered locus">ECIAI1_2368</name>
</gene>
<name>YFBU_ECO8A</name>
<evidence type="ECO:0000255" key="1">
    <source>
        <dbReference type="HAMAP-Rule" id="MF_00762"/>
    </source>
</evidence>
<protein>
    <recommendedName>
        <fullName evidence="1">UPF0304 protein YfbU</fullName>
    </recommendedName>
</protein>
<reference key="1">
    <citation type="journal article" date="2009" name="PLoS Genet.">
        <title>Organised genome dynamics in the Escherichia coli species results in highly diverse adaptive paths.</title>
        <authorList>
            <person name="Touchon M."/>
            <person name="Hoede C."/>
            <person name="Tenaillon O."/>
            <person name="Barbe V."/>
            <person name="Baeriswyl S."/>
            <person name="Bidet P."/>
            <person name="Bingen E."/>
            <person name="Bonacorsi S."/>
            <person name="Bouchier C."/>
            <person name="Bouvet O."/>
            <person name="Calteau A."/>
            <person name="Chiapello H."/>
            <person name="Clermont O."/>
            <person name="Cruveiller S."/>
            <person name="Danchin A."/>
            <person name="Diard M."/>
            <person name="Dossat C."/>
            <person name="Karoui M.E."/>
            <person name="Frapy E."/>
            <person name="Garry L."/>
            <person name="Ghigo J.M."/>
            <person name="Gilles A.M."/>
            <person name="Johnson J."/>
            <person name="Le Bouguenec C."/>
            <person name="Lescat M."/>
            <person name="Mangenot S."/>
            <person name="Martinez-Jehanne V."/>
            <person name="Matic I."/>
            <person name="Nassif X."/>
            <person name="Oztas S."/>
            <person name="Petit M.A."/>
            <person name="Pichon C."/>
            <person name="Rouy Z."/>
            <person name="Ruf C.S."/>
            <person name="Schneider D."/>
            <person name="Tourret J."/>
            <person name="Vacherie B."/>
            <person name="Vallenet D."/>
            <person name="Medigue C."/>
            <person name="Rocha E.P.C."/>
            <person name="Denamur E."/>
        </authorList>
    </citation>
    <scope>NUCLEOTIDE SEQUENCE [LARGE SCALE GENOMIC DNA]</scope>
    <source>
        <strain>IAI1</strain>
    </source>
</reference>
<accession>B7M5X3</accession>
<comment type="similarity">
    <text evidence="1">Belongs to the UPF0304 family.</text>
</comment>
<proteinExistence type="inferred from homology"/>
<sequence length="164" mass="19536">MEMTNAQRLILSNQYKMMTMLDPANAERYRRLQTIIERGYGLQMRELDREFGELKEETCRTIIDIMEMYHALHVSWSNLQDQQSIDERRVTFLGFDAATEARYLGYVRFMVNVEGRYTHFDAGTHGFNAQTPMWEKYQRMLNVWHACPRQYHLSANEINQIINA</sequence>
<dbReference type="EMBL" id="CU928160">
    <property type="protein sequence ID" value="CAQ99210.1"/>
    <property type="molecule type" value="Genomic_DNA"/>
</dbReference>
<dbReference type="RefSeq" id="WP_000426124.1">
    <property type="nucleotide sequence ID" value="NC_011741.1"/>
</dbReference>
<dbReference type="SMR" id="B7M5X3"/>
<dbReference type="KEGG" id="ecr:ECIAI1_2368"/>
<dbReference type="HOGENOM" id="CLU_101021_1_0_6"/>
<dbReference type="FunFam" id="1.10.3190.10:FF:000001">
    <property type="entry name" value="UPF0304 protein YfbU"/>
    <property type="match status" value="1"/>
</dbReference>
<dbReference type="Gene3D" id="1.10.287.680">
    <property type="entry name" value="Helix hairpin bin"/>
    <property type="match status" value="1"/>
</dbReference>
<dbReference type="Gene3D" id="1.10.3190.10">
    <property type="entry name" value="yfbu gene product, domain 2"/>
    <property type="match status" value="1"/>
</dbReference>
<dbReference type="HAMAP" id="MF_00762">
    <property type="entry name" value="UPF0304"/>
    <property type="match status" value="1"/>
</dbReference>
<dbReference type="InterPro" id="IPR005587">
    <property type="entry name" value="UPF0304_YfbU"/>
</dbReference>
<dbReference type="InterPro" id="IPR023146">
    <property type="entry name" value="YfbU_alpha-helical_sf"/>
</dbReference>
<dbReference type="InterPro" id="IPR023145">
    <property type="entry name" value="YfbU_helix-hairpin_sf"/>
</dbReference>
<dbReference type="NCBIfam" id="NF003936">
    <property type="entry name" value="PRK05445.1"/>
    <property type="match status" value="1"/>
</dbReference>
<dbReference type="Pfam" id="PF03887">
    <property type="entry name" value="YfbU"/>
    <property type="match status" value="1"/>
</dbReference>
<dbReference type="PIRSF" id="PIRSF006272">
    <property type="entry name" value="UCP006272"/>
    <property type="match status" value="1"/>
</dbReference>
<dbReference type="SUPFAM" id="SSF116960">
    <property type="entry name" value="YfbU-like"/>
    <property type="match status" value="1"/>
</dbReference>
<organism>
    <name type="scientific">Escherichia coli O8 (strain IAI1)</name>
    <dbReference type="NCBI Taxonomy" id="585034"/>
    <lineage>
        <taxon>Bacteria</taxon>
        <taxon>Pseudomonadati</taxon>
        <taxon>Pseudomonadota</taxon>
        <taxon>Gammaproteobacteria</taxon>
        <taxon>Enterobacterales</taxon>
        <taxon>Enterobacteriaceae</taxon>
        <taxon>Escherichia</taxon>
    </lineage>
</organism>
<feature type="chain" id="PRO_1000198340" description="UPF0304 protein YfbU">
    <location>
        <begin position="1"/>
        <end position="164"/>
    </location>
</feature>